<reference key="1">
    <citation type="submission" date="2006-12" db="EMBL/GenBank/DDBJ databases">
        <title>Complete sequence of Shewanella sp. W3-18-1.</title>
        <authorList>
            <consortium name="US DOE Joint Genome Institute"/>
            <person name="Copeland A."/>
            <person name="Lucas S."/>
            <person name="Lapidus A."/>
            <person name="Barry K."/>
            <person name="Detter J.C."/>
            <person name="Glavina del Rio T."/>
            <person name="Hammon N."/>
            <person name="Israni S."/>
            <person name="Dalin E."/>
            <person name="Tice H."/>
            <person name="Pitluck S."/>
            <person name="Chain P."/>
            <person name="Malfatti S."/>
            <person name="Shin M."/>
            <person name="Vergez L."/>
            <person name="Schmutz J."/>
            <person name="Larimer F."/>
            <person name="Land M."/>
            <person name="Hauser L."/>
            <person name="Kyrpides N."/>
            <person name="Lykidis A."/>
            <person name="Tiedje J."/>
            <person name="Richardson P."/>
        </authorList>
    </citation>
    <scope>NUCLEOTIDE SEQUENCE [LARGE SCALE GENOMIC DNA]</scope>
    <source>
        <strain>W3-18-1</strain>
    </source>
</reference>
<gene>
    <name evidence="1" type="primary">orn</name>
    <name type="ordered locus">Sputw3181_0654</name>
</gene>
<keyword id="KW-0963">Cytoplasm</keyword>
<keyword id="KW-0269">Exonuclease</keyword>
<keyword id="KW-0378">Hydrolase</keyword>
<keyword id="KW-0540">Nuclease</keyword>
<name>ORN_SHESW</name>
<organism>
    <name type="scientific">Shewanella sp. (strain W3-18-1)</name>
    <dbReference type="NCBI Taxonomy" id="351745"/>
    <lineage>
        <taxon>Bacteria</taxon>
        <taxon>Pseudomonadati</taxon>
        <taxon>Pseudomonadota</taxon>
        <taxon>Gammaproteobacteria</taxon>
        <taxon>Alteromonadales</taxon>
        <taxon>Shewanellaceae</taxon>
        <taxon>Shewanella</taxon>
    </lineage>
</organism>
<sequence>MTANVNNLIWIDLEMTGLEPDVDRIIEIATLVTDQELNIIGQGPVIAIHQPDEVLAAMDDWNQKHHGESGLIDRVRASQDNEAQAVAKTIAFLEQYVPKGASPMCGNSVGQDRRFLNRYMRELEDYFHYRNLDVSTVKELVKRWSPEIMEGFKKQNTHQALQDIQESIAELQYYRSKVFKI</sequence>
<protein>
    <recommendedName>
        <fullName evidence="1">Oligoribonuclease</fullName>
        <ecNumber evidence="1">3.1.15.-</ecNumber>
    </recommendedName>
</protein>
<comment type="function">
    <text evidence="1">3'-to-5' exoribonuclease specific for small oligoribonucleotides.</text>
</comment>
<comment type="subcellular location">
    <subcellularLocation>
        <location evidence="1">Cytoplasm</location>
    </subcellularLocation>
</comment>
<comment type="similarity">
    <text evidence="1">Belongs to the oligoribonuclease family.</text>
</comment>
<accession>A1RFR0</accession>
<proteinExistence type="inferred from homology"/>
<feature type="chain" id="PRO_1000004292" description="Oligoribonuclease">
    <location>
        <begin position="1"/>
        <end position="181"/>
    </location>
</feature>
<feature type="domain" description="Exonuclease" evidence="1">
    <location>
        <begin position="8"/>
        <end position="171"/>
    </location>
</feature>
<feature type="active site" evidence="1">
    <location>
        <position position="129"/>
    </location>
</feature>
<dbReference type="EC" id="3.1.15.-" evidence="1"/>
<dbReference type="EMBL" id="CP000503">
    <property type="protein sequence ID" value="ABM23505.1"/>
    <property type="molecule type" value="Genomic_DNA"/>
</dbReference>
<dbReference type="RefSeq" id="WP_011788035.1">
    <property type="nucleotide sequence ID" value="NC_008750.1"/>
</dbReference>
<dbReference type="SMR" id="A1RFR0"/>
<dbReference type="GeneID" id="67444868"/>
<dbReference type="KEGG" id="shw:Sputw3181_0654"/>
<dbReference type="HOGENOM" id="CLU_064761_2_0_6"/>
<dbReference type="Proteomes" id="UP000002597">
    <property type="component" value="Chromosome"/>
</dbReference>
<dbReference type="GO" id="GO:0005737">
    <property type="term" value="C:cytoplasm"/>
    <property type="evidence" value="ECO:0007669"/>
    <property type="project" value="UniProtKB-SubCell"/>
</dbReference>
<dbReference type="GO" id="GO:0000175">
    <property type="term" value="F:3'-5'-RNA exonuclease activity"/>
    <property type="evidence" value="ECO:0007669"/>
    <property type="project" value="InterPro"/>
</dbReference>
<dbReference type="GO" id="GO:0003676">
    <property type="term" value="F:nucleic acid binding"/>
    <property type="evidence" value="ECO:0007669"/>
    <property type="project" value="InterPro"/>
</dbReference>
<dbReference type="GO" id="GO:0006259">
    <property type="term" value="P:DNA metabolic process"/>
    <property type="evidence" value="ECO:0007669"/>
    <property type="project" value="UniProtKB-ARBA"/>
</dbReference>
<dbReference type="CDD" id="cd06135">
    <property type="entry name" value="Orn"/>
    <property type="match status" value="1"/>
</dbReference>
<dbReference type="FunFam" id="3.30.420.10:FF:000003">
    <property type="entry name" value="Oligoribonuclease"/>
    <property type="match status" value="1"/>
</dbReference>
<dbReference type="Gene3D" id="3.30.420.10">
    <property type="entry name" value="Ribonuclease H-like superfamily/Ribonuclease H"/>
    <property type="match status" value="1"/>
</dbReference>
<dbReference type="HAMAP" id="MF_00045">
    <property type="entry name" value="Oligoribonuclease"/>
    <property type="match status" value="1"/>
</dbReference>
<dbReference type="InterPro" id="IPR013520">
    <property type="entry name" value="Exonuclease_RNaseT/DNA_pol3"/>
</dbReference>
<dbReference type="InterPro" id="IPR022894">
    <property type="entry name" value="Oligoribonuclease"/>
</dbReference>
<dbReference type="InterPro" id="IPR012337">
    <property type="entry name" value="RNaseH-like_sf"/>
</dbReference>
<dbReference type="InterPro" id="IPR036397">
    <property type="entry name" value="RNaseH_sf"/>
</dbReference>
<dbReference type="NCBIfam" id="NF003765">
    <property type="entry name" value="PRK05359.1"/>
    <property type="match status" value="1"/>
</dbReference>
<dbReference type="PANTHER" id="PTHR11046">
    <property type="entry name" value="OLIGORIBONUCLEASE, MITOCHONDRIAL"/>
    <property type="match status" value="1"/>
</dbReference>
<dbReference type="PANTHER" id="PTHR11046:SF0">
    <property type="entry name" value="OLIGORIBONUCLEASE, MITOCHONDRIAL"/>
    <property type="match status" value="1"/>
</dbReference>
<dbReference type="Pfam" id="PF00929">
    <property type="entry name" value="RNase_T"/>
    <property type="match status" value="1"/>
</dbReference>
<dbReference type="SMART" id="SM00479">
    <property type="entry name" value="EXOIII"/>
    <property type="match status" value="1"/>
</dbReference>
<dbReference type="SUPFAM" id="SSF53098">
    <property type="entry name" value="Ribonuclease H-like"/>
    <property type="match status" value="1"/>
</dbReference>
<evidence type="ECO:0000255" key="1">
    <source>
        <dbReference type="HAMAP-Rule" id="MF_00045"/>
    </source>
</evidence>